<organism>
    <name type="scientific">Saccharomyces cerevisiae (strain ATCC 204508 / S288c)</name>
    <name type="common">Baker's yeast</name>
    <dbReference type="NCBI Taxonomy" id="559292"/>
    <lineage>
        <taxon>Eukaryota</taxon>
        <taxon>Fungi</taxon>
        <taxon>Dikarya</taxon>
        <taxon>Ascomycota</taxon>
        <taxon>Saccharomycotina</taxon>
        <taxon>Saccharomycetes</taxon>
        <taxon>Saccharomycetales</taxon>
        <taxon>Saccharomycetaceae</taxon>
        <taxon>Saccharomyces</taxon>
    </lineage>
</organism>
<comment type="function">
    <text evidence="3 5 6 8 12">Acts as a component of the CYC8-TUP1 corepressor complex which is involved in the repression of many genes in a wide variety of physiological processes including heme-regulated and catabolite repressed genes. May also be involved in the derepression of at least some target genes. The complex is recruited to target genes by interaction with DNA-bound transcriptional repressors, like MATALPHA2, MIG1, RFX1 and SKO1. The complex recruits histone deacetylases to produce a repressive chromatin structure, interacts with hypoacetylated N-terminal tails of histones H3 and H4 that have been programmed for repression by the action of histone deacetylases and interferes directly with the transcriptional machinery by associating with the RNA polymerase II mediator complex.</text>
</comment>
<comment type="subunit">
    <text evidence="3 4 5 7 9 10 13 14 15 16">Associates with TUP1 to form the CYC8-TUP1 (or TUP1-SSN6) corepressor complex that is composed of 4 copies of TUP1 and one copy of CYC8. Interacts with MATALPHA2, CTI6, MIG1, TUP1, SUT1, RFX1, PGD1, HOS1, HOS2 and RPD3.</text>
</comment>
<comment type="interaction">
    <interactant intactId="EBI-18215">
        <id>P14922</id>
    </interactant>
    <interactant intactId="EBI-8475">
        <id>P53096</id>
        <label>HOS2</label>
    </interactant>
    <organismsDiffer>false</organismsDiffer>
    <experiments>4</experiments>
</comment>
<comment type="interaction">
    <interactant intactId="EBI-18215">
        <id>P14922</id>
    </interactant>
    <interactant intactId="EBI-13268">
        <id>P40356</id>
        <label>PGD1</label>
    </interactant>
    <organismsDiffer>false</organismsDiffer>
    <experiments>3</experiments>
</comment>
<comment type="interaction">
    <interactant intactId="EBI-18215">
        <id>P14922</id>
    </interactant>
    <interactant intactId="EBI-15036">
        <id>P48743</id>
        <label>RFX1</label>
    </interactant>
    <organismsDiffer>false</organismsDiffer>
    <experiments>2</experiments>
</comment>
<comment type="interaction">
    <interactant intactId="EBI-18215">
        <id>P14922</id>
    </interactant>
    <interactant intactId="EBI-15864">
        <id>P32561</id>
        <label>RPD3</label>
    </interactant>
    <organismsDiffer>false</organismsDiffer>
    <experiments>6</experiments>
</comment>
<comment type="interaction">
    <interactant intactId="EBI-18215">
        <id>P14922</id>
    </interactant>
    <interactant intactId="EBI-19654">
        <id>P16649</id>
        <label>TUP1</label>
    </interactant>
    <organismsDiffer>false</organismsDiffer>
    <experiments>7</experiments>
</comment>
<comment type="subcellular location">
    <subcellularLocation>
        <location>Nucleus</location>
    </subcellularLocation>
</comment>
<comment type="domain">
    <text evidence="1">The prion domain (PrD) is a Gln/Asn (Q/N)-rich domain, which is unstructured in its native, soluble form, and which forms a parallel in-register beta-sheet in its amyloid form.</text>
</comment>
<comment type="miscellaneous">
    <text evidence="18">[OCT+] is the prion form of CYC8. [OCT+] is the result of a conformational change of the cellular CYC8 protein that becomes self-propagating and infectious. [OCT+]-aggregates sequester soluble CYC8, resulting in increased levels of iso-2-cytochrome c, defects in sporulation and mating, higher levels of invertase derepression and increased flocculation, reminiscent of a partial loss of function of the CYC8-TUP1 corepressor complex. [OCT+] can be cured by GdnHCl and by inactivation of the molecular chaperone HSP104, which is required for [OCT+] propagation. It is speculated that prion properties of transcription factors may generate an optimized phenotypic heterogeneity that buffers yeast populations against diverse environmental insults.</text>
</comment>
<comment type="miscellaneous">
    <text evidence="11">Present with 3890 molecules/cell in log phase SD medium.</text>
</comment>
<comment type="similarity">
    <text evidence="17">Belongs to the CYC8/SSN6 family.</text>
</comment>
<feature type="chain" id="PRO_0000106327" description="General transcriptional corepressor CYC8">
    <location>
        <begin position="1"/>
        <end position="966"/>
    </location>
</feature>
<feature type="repeat" description="TPR 1">
    <location>
        <begin position="46"/>
        <end position="79"/>
    </location>
</feature>
<feature type="repeat" description="TPR 2">
    <location>
        <begin position="80"/>
        <end position="113"/>
    </location>
</feature>
<feature type="repeat" description="TPR 3">
    <location>
        <begin position="114"/>
        <end position="147"/>
    </location>
</feature>
<feature type="repeat" description="TPR 4">
    <location>
        <begin position="150"/>
        <end position="183"/>
    </location>
</feature>
<feature type="repeat" description="TPR 5">
    <location>
        <begin position="187"/>
        <end position="220"/>
    </location>
</feature>
<feature type="repeat" description="TPR 6">
    <location>
        <begin position="224"/>
        <end position="257"/>
    </location>
</feature>
<feature type="repeat" description="TPR 7">
    <location>
        <begin position="262"/>
        <end position="295"/>
    </location>
</feature>
<feature type="repeat" description="TPR 8">
    <location>
        <begin position="296"/>
        <end position="329"/>
    </location>
</feature>
<feature type="repeat" description="TPR 9">
    <location>
        <begin position="330"/>
        <end position="363"/>
    </location>
</feature>
<feature type="repeat" description="TPR 10">
    <location>
        <begin position="364"/>
        <end position="398"/>
    </location>
</feature>
<feature type="region of interest" description="Disordered" evidence="2">
    <location>
        <begin position="1"/>
        <end position="37"/>
    </location>
</feature>
<feature type="region of interest" description="Disordered" evidence="2">
    <location>
        <begin position="412"/>
        <end position="489"/>
    </location>
</feature>
<feature type="region of interest" description="Prion domain (PrD)">
    <location>
        <begin position="467"/>
        <end position="682"/>
    </location>
</feature>
<feature type="region of interest" description="Disordered" evidence="2">
    <location>
        <begin position="631"/>
        <end position="666"/>
    </location>
</feature>
<feature type="region of interest" description="Disordered" evidence="2">
    <location>
        <begin position="699"/>
        <end position="723"/>
    </location>
</feature>
<feature type="region of interest" description="Disordered" evidence="2">
    <location>
        <begin position="759"/>
        <end position="966"/>
    </location>
</feature>
<feature type="compositionally biased region" description="Low complexity" evidence="2">
    <location>
        <begin position="12"/>
        <end position="36"/>
    </location>
</feature>
<feature type="compositionally biased region" description="Polar residues" evidence="2">
    <location>
        <begin position="412"/>
        <end position="429"/>
    </location>
</feature>
<feature type="compositionally biased region" description="Polar residues" evidence="2">
    <location>
        <begin position="439"/>
        <end position="489"/>
    </location>
</feature>
<feature type="compositionally biased region" description="Low complexity" evidence="2">
    <location>
        <begin position="637"/>
        <end position="666"/>
    </location>
</feature>
<feature type="compositionally biased region" description="Polar residues" evidence="2">
    <location>
        <begin position="699"/>
        <end position="713"/>
    </location>
</feature>
<feature type="compositionally biased region" description="Polar residues" evidence="2">
    <location>
        <begin position="759"/>
        <end position="780"/>
    </location>
</feature>
<feature type="compositionally biased region" description="Low complexity" evidence="2">
    <location>
        <begin position="797"/>
        <end position="808"/>
    </location>
</feature>
<feature type="compositionally biased region" description="Polar residues" evidence="2">
    <location>
        <begin position="814"/>
        <end position="823"/>
    </location>
</feature>
<feature type="compositionally biased region" description="Low complexity" evidence="2">
    <location>
        <begin position="826"/>
        <end position="843"/>
    </location>
</feature>
<feature type="compositionally biased region" description="Polar residues" evidence="2">
    <location>
        <begin position="844"/>
        <end position="860"/>
    </location>
</feature>
<feature type="compositionally biased region" description="Basic and acidic residues" evidence="2">
    <location>
        <begin position="870"/>
        <end position="880"/>
    </location>
</feature>
<feature type="compositionally biased region" description="Low complexity" evidence="2">
    <location>
        <begin position="882"/>
        <end position="896"/>
    </location>
</feature>
<feature type="compositionally biased region" description="Basic and acidic residues" evidence="2">
    <location>
        <begin position="897"/>
        <end position="906"/>
    </location>
</feature>
<feature type="compositionally biased region" description="Basic and acidic residues" evidence="2">
    <location>
        <begin position="924"/>
        <end position="936"/>
    </location>
</feature>
<feature type="compositionally biased region" description="Polar residues" evidence="2">
    <location>
        <begin position="940"/>
        <end position="950"/>
    </location>
</feature>
<feature type="modified residue" description="Phosphoserine" evidence="21 22">
    <location>
        <position position="429"/>
    </location>
</feature>
<feature type="modified residue" description="Phosphothreonine" evidence="21">
    <location>
        <position position="475"/>
    </location>
</feature>
<feature type="modified residue" description="Phosphoserine" evidence="19">
    <location>
        <position position="710"/>
    </location>
</feature>
<feature type="modified residue" description="Phosphoserine" evidence="22">
    <location>
        <position position="741"/>
    </location>
</feature>
<feature type="modified residue" description="Phosphoserine" evidence="21">
    <location>
        <position position="768"/>
    </location>
</feature>
<feature type="modified residue" description="Phosphoserine" evidence="20 22">
    <location>
        <position position="815"/>
    </location>
</feature>
<feature type="modified residue" description="Phosphoserine" evidence="20 22">
    <location>
        <position position="817"/>
    </location>
</feature>
<feature type="modified residue" description="Phosphoserine" evidence="21">
    <location>
        <position position="866"/>
    </location>
</feature>
<feature type="modified residue" description="Phosphoserine" evidence="20 21 22">
    <location>
        <position position="943"/>
    </location>
</feature>
<feature type="sequence conflict" description="In Ref. 1; AAA34545 and 2; AAA35103." evidence="17" ref="1 2">
    <original>Q</original>
    <variation>K</variation>
    <location>
        <position position="547"/>
    </location>
</feature>
<reference key="1">
    <citation type="journal article" date="1988" name="Gene">
        <title>Cloning and characterization of the CYC8 gene mediating glucose repression in yeast.</title>
        <authorList>
            <person name="Trumbly R.J."/>
        </authorList>
    </citation>
    <scope>NUCLEOTIDE SEQUENCE [GENOMIC DNA]</scope>
</reference>
<reference key="2">
    <citation type="journal article" date="1987" name="Mol. Cell. Biol.">
        <title>Molecular analysis of SSN6, a gene functionally related to the SNF1 protein kinase of Saccharomyces cerevisiae.</title>
        <authorList>
            <person name="Schultz J."/>
            <person name="Carlson M."/>
        </authorList>
    </citation>
    <scope>NUCLEOTIDE SEQUENCE [GENOMIC DNA]</scope>
</reference>
<reference key="3">
    <citation type="journal article" date="1992" name="Yeast">
        <title>Molecular analysis of yeast chromosome II between CMD1 and LYS2: the excision repair gene RAD16 located in this region belongs to a novel group of double-finger proteins.</title>
        <authorList>
            <person name="Mannhaupt G."/>
            <person name="Stucka R."/>
            <person name="Ehnle S."/>
            <person name="Vetter I."/>
            <person name="Feldmann H."/>
        </authorList>
    </citation>
    <scope>NUCLEOTIDE SEQUENCE [GENOMIC DNA]</scope>
    <source>
        <strain>ATCC 204508 / S288c</strain>
    </source>
</reference>
<reference key="4">
    <citation type="journal article" date="1994" name="EMBO J.">
        <title>Complete DNA sequence of yeast chromosome II.</title>
        <authorList>
            <person name="Feldmann H."/>
            <person name="Aigle M."/>
            <person name="Aljinovic G."/>
            <person name="Andre B."/>
            <person name="Baclet M.C."/>
            <person name="Barthe C."/>
            <person name="Baur A."/>
            <person name="Becam A.-M."/>
            <person name="Biteau N."/>
            <person name="Boles E."/>
            <person name="Brandt T."/>
            <person name="Brendel M."/>
            <person name="Brueckner M."/>
            <person name="Bussereau F."/>
            <person name="Christiansen C."/>
            <person name="Contreras R."/>
            <person name="Crouzet M."/>
            <person name="Cziepluch C."/>
            <person name="Demolis N."/>
            <person name="Delaveau T."/>
            <person name="Doignon F."/>
            <person name="Domdey H."/>
            <person name="Duesterhus S."/>
            <person name="Dubois E."/>
            <person name="Dujon B."/>
            <person name="El Bakkoury M."/>
            <person name="Entian K.-D."/>
            <person name="Feuermann M."/>
            <person name="Fiers W."/>
            <person name="Fobo G.M."/>
            <person name="Fritz C."/>
            <person name="Gassenhuber J."/>
            <person name="Glansdorff N."/>
            <person name="Goffeau A."/>
            <person name="Grivell L.A."/>
            <person name="de Haan M."/>
            <person name="Hein C."/>
            <person name="Herbert C.J."/>
            <person name="Hollenberg C.P."/>
            <person name="Holmstroem K."/>
            <person name="Jacq C."/>
            <person name="Jacquet M."/>
            <person name="Jauniaux J.-C."/>
            <person name="Jonniaux J.-L."/>
            <person name="Kallesoee T."/>
            <person name="Kiesau P."/>
            <person name="Kirchrath L."/>
            <person name="Koetter P."/>
            <person name="Korol S."/>
            <person name="Liebl S."/>
            <person name="Logghe M."/>
            <person name="Lohan A.J.E."/>
            <person name="Louis E.J."/>
            <person name="Li Z.Y."/>
            <person name="Maat M.J."/>
            <person name="Mallet L."/>
            <person name="Mannhaupt G."/>
            <person name="Messenguy F."/>
            <person name="Miosga T."/>
            <person name="Molemans F."/>
            <person name="Mueller S."/>
            <person name="Nasr F."/>
            <person name="Obermaier B."/>
            <person name="Perea J."/>
            <person name="Pierard A."/>
            <person name="Piravandi E."/>
            <person name="Pohl F.M."/>
            <person name="Pohl T.M."/>
            <person name="Potier S."/>
            <person name="Proft M."/>
            <person name="Purnelle B."/>
            <person name="Ramezani Rad M."/>
            <person name="Rieger M."/>
            <person name="Rose M."/>
            <person name="Schaaff-Gerstenschlaeger I."/>
            <person name="Scherens B."/>
            <person name="Schwarzlose C."/>
            <person name="Skala J."/>
            <person name="Slonimski P.P."/>
            <person name="Smits P.H.M."/>
            <person name="Souciet J.-L."/>
            <person name="Steensma H.Y."/>
            <person name="Stucka R."/>
            <person name="Urrestarazu L.A."/>
            <person name="van der Aart Q.J.M."/>
            <person name="Van Dyck L."/>
            <person name="Vassarotti A."/>
            <person name="Vetter I."/>
            <person name="Vierendeels F."/>
            <person name="Vissers S."/>
            <person name="Wagner G."/>
            <person name="de Wergifosse P."/>
            <person name="Wolfe K.H."/>
            <person name="Zagulski M."/>
            <person name="Zimmermann F.K."/>
            <person name="Mewes H.-W."/>
            <person name="Kleine K."/>
        </authorList>
    </citation>
    <scope>NUCLEOTIDE SEQUENCE [LARGE SCALE GENOMIC DNA]</scope>
    <source>
        <strain>ATCC 204508 / S288c</strain>
    </source>
</reference>
<reference key="5">
    <citation type="journal article" date="2014" name="G3 (Bethesda)">
        <title>The reference genome sequence of Saccharomyces cerevisiae: Then and now.</title>
        <authorList>
            <person name="Engel S.R."/>
            <person name="Dietrich F.S."/>
            <person name="Fisk D.G."/>
            <person name="Binkley G."/>
            <person name="Balakrishnan R."/>
            <person name="Costanzo M.C."/>
            <person name="Dwight S.S."/>
            <person name="Hitz B.C."/>
            <person name="Karra K."/>
            <person name="Nash R.S."/>
            <person name="Weng S."/>
            <person name="Wong E.D."/>
            <person name="Lloyd P."/>
            <person name="Skrzypek M.S."/>
            <person name="Miyasato S.R."/>
            <person name="Simison M."/>
            <person name="Cherry J.M."/>
        </authorList>
    </citation>
    <scope>GENOME REANNOTATION</scope>
    <source>
        <strain>ATCC 204508 / S288c</strain>
    </source>
</reference>
<reference key="6">
    <citation type="journal article" date="1990" name="Cell">
        <title>A repeating amino acid motif in CDC23 defines a family of proteins and a new relationship among genes required for mitosis and RNA synthesis.</title>
        <authorList>
            <person name="Sikorski R.S."/>
            <person name="Boguski M.S."/>
            <person name="Goebl M."/>
            <person name="Hieter P.A."/>
        </authorList>
    </citation>
    <scope>DOMAINS TPR REPEATS</scope>
</reference>
<reference key="7">
    <citation type="journal article" date="1995" name="Genes Dev.">
        <title>The tetratricopeptide repeats of Ssn6 interact with the homeo domain of alpha 2.</title>
        <authorList>
            <person name="Smith R.L."/>
            <person name="Redd M.J."/>
            <person name="Johnson A.D."/>
        </authorList>
    </citation>
    <scope>INTERACTION WITH MATALPHA2</scope>
</reference>
<reference key="8">
    <citation type="journal article" date="1995" name="Proc. Natl. Acad. Sci. U.S.A.">
        <title>Repression by SSN6-TUP1 is directed by MIG1, a repressor/activator protein.</title>
        <authorList>
            <person name="Treitel M.A."/>
            <person name="Carlson M."/>
        </authorList>
    </citation>
    <scope>INTERACTION WITH MIG1</scope>
</reference>
<reference key="9">
    <citation type="journal article" date="1996" name="Mol. Cell. Biol.">
        <title>The Cyc8 (Ssn6)-Tup1 corepressor complex is composed of one Cyc8 and four Tup1 subunits.</title>
        <authorList>
            <person name="Varanasi U.S."/>
            <person name="Klis M."/>
            <person name="Mikesell P.B."/>
            <person name="Trumbly R.J."/>
        </authorList>
    </citation>
    <scope>SUBUNIT</scope>
</reference>
<reference key="10">
    <citation type="journal article" date="1998" name="Cell">
        <title>The DNA replication and damage checkpoint pathways induce transcription by inhibition of the Crt1 repressor.</title>
        <authorList>
            <person name="Huang M."/>
            <person name="Zhou Z."/>
            <person name="Elledge S.J."/>
        </authorList>
    </citation>
    <scope>INTERACTION WITH RFX1</scope>
</reference>
<reference key="11">
    <citation type="journal article" date="2000" name="Genes Dev.">
        <title>Ssn6-Tup1 interacts with class I histone deacetylases required for repression.</title>
        <authorList>
            <person name="Watson A.D."/>
            <person name="Edmondson D.G."/>
            <person name="Bone J.R."/>
            <person name="Mukai Y."/>
            <person name="Yu Y."/>
            <person name="Du W."/>
            <person name="Stillman D.J."/>
            <person name="Roth S.Y."/>
        </authorList>
    </citation>
    <scope>INTERACTION WITH TUP1; HOS2 AND RPD3</scope>
    <scope>FUNCTION OF THE CYC8-TUP1 COMPLEX</scope>
</reference>
<reference key="12">
    <citation type="journal article" date="2000" name="J. Biol. Chem.">
        <title>Hrs1/Med3 is a Cyc8-Tup1 corepressor target in the RNA polymerase II holoenzyme.</title>
        <authorList>
            <person name="Papamichos-Chronakis M."/>
            <person name="Conlan R.S."/>
            <person name="Gounalaki N."/>
            <person name="Copf T."/>
            <person name="Tzamarias D."/>
        </authorList>
    </citation>
    <scope>INTERACTION WITH PGD1</scope>
    <scope>FUNCTION OF THE CYC8-TUP1 COMPLEX</scope>
</reference>
<reference key="13">
    <citation type="journal article" date="2000" name="Proc. Natl. Acad. Sci. U.S.A.">
        <title>A sequence resembling a peroxisomal targeting sequence directs the interaction between the tetratricopeptide repeats of Ssn6 and the homeodomain of alpha 2.</title>
        <authorList>
            <person name="Smith R.L."/>
            <person name="Johnson A.D."/>
        </authorList>
    </citation>
    <scope>INTERACTION WITH MATALPHA2</scope>
</reference>
<reference key="14">
    <citation type="journal article" date="2001" name="EMBO J.">
        <title>Regulation of the Sko1 transcriptional repressor by the Hog1 MAP kinase in response to osmotic stress.</title>
        <authorList>
            <person name="Proft M."/>
            <person name="Pascual-Ahuir A."/>
            <person name="de Nadal E."/>
            <person name="Arino J."/>
            <person name="Serrano R."/>
            <person name="Posas F."/>
        </authorList>
    </citation>
    <scope>FUNCTION OF THE CYC8-TUP1 COMPLEX</scope>
</reference>
<reference key="15">
    <citation type="journal article" date="2001" name="Mol. Microbiol.">
        <title>SUT1p interaction with Cyc8p(Ssn6p) relieves hypoxic genes from Cyc8p-Tup1p repression in Saccharomyces cerevisiae.</title>
        <authorList>
            <person name="Regnacq M."/>
            <person name="Alimardani P."/>
            <person name="El Moudni B."/>
            <person name="Berges T."/>
        </authorList>
    </citation>
    <scope>INTERACTION WITH SUT1</scope>
</reference>
<reference key="16">
    <citation type="journal article" date="2002" name="Mol. Cell">
        <title>Cti6, a PHD domain protein, bridges the Cyc8-Tup1 corepressor and the SAGA coactivator to overcome repression at GAL1.</title>
        <authorList>
            <person name="Papamichos-Chronakis M."/>
            <person name="Petrakis T."/>
            <person name="Ktistaki E."/>
            <person name="Topalidou I."/>
            <person name="Tzamarias D."/>
        </authorList>
    </citation>
    <scope>INTERACTION WITH CTI6</scope>
</reference>
<reference key="17">
    <citation type="journal article" date="2003" name="J. Biol. Chem.">
        <title>Tup1-Ssn6 interacts with multiple class I histone deacetylases in vivo.</title>
        <authorList>
            <person name="Davie J.K."/>
            <person name="Edmondson D.G."/>
            <person name="Coco C.B."/>
            <person name="Dent S.Y."/>
        </authorList>
    </citation>
    <scope>INTERACTION WITH HOS1; HOS2 AND RPD3</scope>
</reference>
<reference key="18">
    <citation type="journal article" date="2002" name="Mol. Cell. Biol.">
        <title>Histone-dependent association of Tup1-Ssn6 with repressed genes in vivo.</title>
        <authorList>
            <person name="Davie J.K."/>
            <person name="Trumbly R.J."/>
            <person name="Dent S.Y."/>
        </authorList>
    </citation>
    <scope>FUNCTION OF THE CYC8-TUP1 COREPRESSOR COMPLEX</scope>
</reference>
<reference key="19">
    <citation type="journal article" date="2003" name="Eukaryot. Cell">
        <title>Recruitment of Tup1-Ssn6 by yeast hypoxic genes and chromatin-independent exclusion of TATA binding protein.</title>
        <authorList>
            <person name="Mennella T.A."/>
            <person name="Klinkenberg L.G."/>
            <person name="Zitomer R.S."/>
        </authorList>
    </citation>
    <scope>FUNCTION OF THE CYC8-TUP1 COMPLEX</scope>
</reference>
<reference key="20">
    <citation type="journal article" date="2003" name="Nature">
        <title>Global analysis of protein expression in yeast.</title>
        <authorList>
            <person name="Ghaemmaghami S."/>
            <person name="Huh W.-K."/>
            <person name="Bower K."/>
            <person name="Howson R.W."/>
            <person name="Belle A."/>
            <person name="Dephoure N."/>
            <person name="O'Shea E.K."/>
            <person name="Weissman J.S."/>
        </authorList>
    </citation>
    <scope>LEVEL OF PROTEIN EXPRESSION [LARGE SCALE ANALYSIS]</scope>
</reference>
<reference key="21">
    <citation type="journal article" date="2007" name="J. Proteome Res.">
        <title>Large-scale phosphorylation analysis of alpha-factor-arrested Saccharomyces cerevisiae.</title>
        <authorList>
            <person name="Li X."/>
            <person name="Gerber S.A."/>
            <person name="Rudner A.D."/>
            <person name="Beausoleil S.A."/>
            <person name="Haas W."/>
            <person name="Villen J."/>
            <person name="Elias J.E."/>
            <person name="Gygi S.P."/>
        </authorList>
    </citation>
    <scope>PHOSPHORYLATION [LARGE SCALE ANALYSIS] AT SER-815; SER-817 AND SER-943</scope>
    <scope>IDENTIFICATION BY MASS SPECTROMETRY [LARGE SCALE ANALYSIS]</scope>
    <source>
        <strain>ADR376</strain>
    </source>
</reference>
<reference key="22">
    <citation type="journal article" date="2007" name="Proc. Natl. Acad. Sci. U.S.A.">
        <title>Analysis of phosphorylation sites on proteins from Saccharomyces cerevisiae by electron transfer dissociation (ETD) mass spectrometry.</title>
        <authorList>
            <person name="Chi A."/>
            <person name="Huttenhower C."/>
            <person name="Geer L.Y."/>
            <person name="Coon J.J."/>
            <person name="Syka J.E.P."/>
            <person name="Bai D.L."/>
            <person name="Shabanowitz J."/>
            <person name="Burke D.J."/>
            <person name="Troyanskaya O.G."/>
            <person name="Hunt D.F."/>
        </authorList>
    </citation>
    <scope>PHOSPHORYLATION [LARGE SCALE ANALYSIS] AT SER-710</scope>
    <scope>IDENTIFICATION BY MASS SPECTROMETRY [LARGE SCALE ANALYSIS]</scope>
</reference>
<reference key="23">
    <citation type="journal article" date="2008" name="Mol. Cell. Proteomics">
        <title>A multidimensional chromatography technology for in-depth phosphoproteome analysis.</title>
        <authorList>
            <person name="Albuquerque C.P."/>
            <person name="Smolka M.B."/>
            <person name="Payne S.H."/>
            <person name="Bafna V."/>
            <person name="Eng J."/>
            <person name="Zhou H."/>
        </authorList>
    </citation>
    <scope>PHOSPHORYLATION [LARGE SCALE ANALYSIS] AT SER-429; THR-475; SER-768; SER-866 AND SER-943</scope>
    <scope>IDENTIFICATION BY MASS SPECTROMETRY [LARGE SCALE ANALYSIS]</scope>
</reference>
<reference key="24">
    <citation type="journal article" date="2009" name="Nat. Cell Biol.">
        <title>The yeast global transcriptional co-repressor protein Cyc8 can propagate as a prion.</title>
        <authorList>
            <person name="Patel B.K."/>
            <person name="Gavin-Smyth J."/>
            <person name="Liebman S.W."/>
        </authorList>
    </citation>
    <scope>PRION FORMATION</scope>
</reference>
<reference key="25">
    <citation type="journal article" date="2009" name="Science">
        <title>Global analysis of Cdk1 substrate phosphorylation sites provides insights into evolution.</title>
        <authorList>
            <person name="Holt L.J."/>
            <person name="Tuch B.B."/>
            <person name="Villen J."/>
            <person name="Johnson A.D."/>
            <person name="Gygi S.P."/>
            <person name="Morgan D.O."/>
        </authorList>
    </citation>
    <scope>PHOSPHORYLATION [LARGE SCALE ANALYSIS] AT SER-429; SER-741; SER-815; SER-817 AND SER-943</scope>
    <scope>IDENTIFICATION BY MASS SPECTROMETRY [LARGE SCALE ANALYSIS]</scope>
</reference>
<accession>P14922</accession>
<accession>D6VQB2</accession>
<sequence>MNPGGEQTIMEQPAQQQQQQQQQQQQQQQQAAVPQQPLDPLTQSTAETWLSIASLAETLGDGDRAAMAYDATLQFNPSSAKALTSLAHLYRSRDMFQRAAELYERALLVNPELSDVWATLGHCYLMLDDLQRAYNAYQQALYHLSNPNVPKLWHGIGILYDRYGSLDYAEEAFAKVLELDPHFEKANEIYFRLGIIYKHQGKWSQALECFRYILPQPPAPLQEWDIWFQLGSVLESMGEWQGAKEAYEHVLAQNQHHAKVLQQLGCLYGMSNVQFYDPQKALDYLLKSLEADPSDATTWYHLGRVHMIRTDYTAAYDAFQQAVNRDSRNPIFWCSIGVLYYQISQYRDALDAYTRAIRLNPYISEVWYDLGTLYETCNNQLSDALDAYKQAARLDVNNVHIRERLEALTKQLENPGNINKSNGAPTNASPAPPPVILQPTLQPNDQGNPLNTRISAQSANATASMVQQQHPAQQTPINSSATMYSNGASPQLQAQAQAQAQAQAQAQAQAQAQAQAQAQAQAQAQAQAQAQAQAQAHAQAQAQAQAQAQAQAQAQAQQQQQQQQQQQQQQQQQQQQQQQQQQQQQQQLQPLPRQQLQQKGVSVQMLNPQQGQPYITQPTVIQAHQLQPFSTQAMEHPQSSQLPPQQQQLQSVQHPQQLQGQPQAQAPQPLIQHNVEQNVLPQKRYMEGAIHTLVDAAVSSSTHTENNTKSPRQPTHAIPTQAPATGITNAEPQVKKQKLNSPNSNINKLVNTATSIEENAKSEVSNQSPAVVESNTNNTSQEEKPVKANSIPSVIGAQEPPQEASPAEEATKAASVSPSTKPLNTEPESSSVQPTVSSESSTTKANDQSTAETIELSTATVPAEASPVEDEVRQHSKEENGTTEASAPSTEEAEPAASRDAEKQQDETAATTITVIKPTLETMETVKEEAKMREEEQTSQEKSPQENTLPRENVVRQVEEDENYDD</sequence>
<gene>
    <name type="primary">CYC8</name>
    <name type="synonym">CRT8</name>
    <name type="synonym">SSN6</name>
    <name type="ordered locus">YBR112C</name>
    <name type="ORF">YBR0908</name>
</gene>
<evidence type="ECO:0000250" key="1"/>
<evidence type="ECO:0000256" key="2">
    <source>
        <dbReference type="SAM" id="MobiDB-lite"/>
    </source>
</evidence>
<evidence type="ECO:0000269" key="3">
    <source>
    </source>
</evidence>
<evidence type="ECO:0000269" key="4">
    <source>
    </source>
</evidence>
<evidence type="ECO:0000269" key="5">
    <source>
    </source>
</evidence>
<evidence type="ECO:0000269" key="6">
    <source>
    </source>
</evidence>
<evidence type="ECO:0000269" key="7">
    <source>
    </source>
</evidence>
<evidence type="ECO:0000269" key="8">
    <source>
    </source>
</evidence>
<evidence type="ECO:0000269" key="9">
    <source>
    </source>
</evidence>
<evidence type="ECO:0000269" key="10">
    <source>
    </source>
</evidence>
<evidence type="ECO:0000269" key="11">
    <source>
    </source>
</evidence>
<evidence type="ECO:0000269" key="12">
    <source>
    </source>
</evidence>
<evidence type="ECO:0000269" key="13">
    <source>
    </source>
</evidence>
<evidence type="ECO:0000269" key="14">
    <source>
    </source>
</evidence>
<evidence type="ECO:0000269" key="15">
    <source>
    </source>
</evidence>
<evidence type="ECO:0000269" key="16">
    <source>
    </source>
</evidence>
<evidence type="ECO:0000305" key="17"/>
<evidence type="ECO:0000305" key="18">
    <source>
    </source>
</evidence>
<evidence type="ECO:0007744" key="19">
    <source>
    </source>
</evidence>
<evidence type="ECO:0007744" key="20">
    <source>
    </source>
</evidence>
<evidence type="ECO:0007744" key="21">
    <source>
    </source>
</evidence>
<evidence type="ECO:0007744" key="22">
    <source>
    </source>
</evidence>
<proteinExistence type="evidence at protein level"/>
<keyword id="KW-0034">Amyloid</keyword>
<keyword id="KW-0539">Nucleus</keyword>
<keyword id="KW-0597">Phosphoprotein</keyword>
<keyword id="KW-0640">Prion</keyword>
<keyword id="KW-1185">Reference proteome</keyword>
<keyword id="KW-0677">Repeat</keyword>
<keyword id="KW-0678">Repressor</keyword>
<keyword id="KW-0802">TPR repeat</keyword>
<keyword id="KW-0804">Transcription</keyword>
<keyword id="KW-0805">Transcription regulation</keyword>
<name>CYC8_YEAST</name>
<protein>
    <recommendedName>
        <fullName>General transcriptional corepressor CYC8</fullName>
    </recommendedName>
    <alternativeName>
        <fullName>Glucose repression mediator protein CYC8</fullName>
    </alternativeName>
</protein>
<dbReference type="EMBL" id="M23440">
    <property type="protein sequence ID" value="AAA34545.1"/>
    <property type="molecule type" value="Genomic_DNA"/>
</dbReference>
<dbReference type="EMBL" id="M17826">
    <property type="protein sequence ID" value="AAA35103.1"/>
    <property type="molecule type" value="Genomic_DNA"/>
</dbReference>
<dbReference type="EMBL" id="X66247">
    <property type="protein sequence ID" value="CAA46973.1"/>
    <property type="molecule type" value="Genomic_DNA"/>
</dbReference>
<dbReference type="EMBL" id="X78993">
    <property type="protein sequence ID" value="CAA55615.1"/>
    <property type="molecule type" value="Genomic_DNA"/>
</dbReference>
<dbReference type="EMBL" id="Z35981">
    <property type="protein sequence ID" value="CAA85069.1"/>
    <property type="molecule type" value="Genomic_DNA"/>
</dbReference>
<dbReference type="EMBL" id="BK006936">
    <property type="protein sequence ID" value="DAA07232.1"/>
    <property type="molecule type" value="Genomic_DNA"/>
</dbReference>
<dbReference type="PIR" id="S25365">
    <property type="entry name" value="S25365"/>
</dbReference>
<dbReference type="RefSeq" id="NP_009670.3">
    <property type="nucleotide sequence ID" value="NM_001178460.3"/>
</dbReference>
<dbReference type="SMR" id="P14922"/>
<dbReference type="BioGRID" id="32816">
    <property type="interactions" value="194"/>
</dbReference>
<dbReference type="ComplexPortal" id="CPX-1663">
    <property type="entry name" value="CYC8-TUP1 corepressor complex"/>
</dbReference>
<dbReference type="DIP" id="DIP-696N"/>
<dbReference type="FunCoup" id="P14922">
    <property type="interactions" value="561"/>
</dbReference>
<dbReference type="IntAct" id="P14922">
    <property type="interactions" value="13"/>
</dbReference>
<dbReference type="MINT" id="P14922"/>
<dbReference type="STRING" id="4932.YBR112C"/>
<dbReference type="GlyGen" id="P14922">
    <property type="glycosylation" value="3 sites, 1 O-linked glycan (2 sites)"/>
</dbReference>
<dbReference type="iPTMnet" id="P14922"/>
<dbReference type="PaxDb" id="4932-YBR112C"/>
<dbReference type="PeptideAtlas" id="P14922"/>
<dbReference type="EnsemblFungi" id="YBR112C_mRNA">
    <property type="protein sequence ID" value="YBR112C"/>
    <property type="gene ID" value="YBR112C"/>
</dbReference>
<dbReference type="GeneID" id="852410"/>
<dbReference type="KEGG" id="sce:YBR112C"/>
<dbReference type="AGR" id="SGD:S000000316"/>
<dbReference type="SGD" id="S000000316">
    <property type="gene designation" value="CYC8"/>
</dbReference>
<dbReference type="VEuPathDB" id="FungiDB:YBR112C"/>
<dbReference type="eggNOG" id="KOG1124">
    <property type="taxonomic scope" value="Eukaryota"/>
</dbReference>
<dbReference type="GeneTree" id="ENSGT00940000168210"/>
<dbReference type="HOGENOM" id="CLU_006762_3_0_1"/>
<dbReference type="InParanoid" id="P14922"/>
<dbReference type="OMA" id="NPHHAKV"/>
<dbReference type="OrthoDB" id="418911at2759"/>
<dbReference type="BioCyc" id="YEAST:G3O-29073-MONOMER"/>
<dbReference type="Reactome" id="R-SCE-2559580">
    <property type="pathway name" value="Oxidative Stress Induced Senescence"/>
</dbReference>
<dbReference type="Reactome" id="R-SCE-3214842">
    <property type="pathway name" value="HDMs demethylate histones"/>
</dbReference>
<dbReference type="BioGRID-ORCS" id="852410">
    <property type="hits" value="7 hits in 10 CRISPR screens"/>
</dbReference>
<dbReference type="PRO" id="PR:P14922"/>
<dbReference type="Proteomes" id="UP000002311">
    <property type="component" value="Chromosome II"/>
</dbReference>
<dbReference type="RNAct" id="P14922">
    <property type="molecule type" value="protein"/>
</dbReference>
<dbReference type="GO" id="GO:0005634">
    <property type="term" value="C:nucleus"/>
    <property type="evidence" value="ECO:0000314"/>
    <property type="project" value="SGD"/>
</dbReference>
<dbReference type="GO" id="GO:0017053">
    <property type="term" value="C:transcription repressor complex"/>
    <property type="evidence" value="ECO:0000353"/>
    <property type="project" value="ComplexPortal"/>
</dbReference>
<dbReference type="GO" id="GO:0031490">
    <property type="term" value="F:chromatin DNA binding"/>
    <property type="evidence" value="ECO:0000318"/>
    <property type="project" value="GO_Central"/>
</dbReference>
<dbReference type="GO" id="GO:0042826">
    <property type="term" value="F:histone deacetylase binding"/>
    <property type="evidence" value="ECO:0000314"/>
    <property type="project" value="SGD"/>
</dbReference>
<dbReference type="GO" id="GO:0000978">
    <property type="term" value="F:RNA polymerase II cis-regulatory region sequence-specific DNA binding"/>
    <property type="evidence" value="ECO:0000318"/>
    <property type="project" value="GO_Central"/>
</dbReference>
<dbReference type="GO" id="GO:0003713">
    <property type="term" value="F:transcription coactivator activity"/>
    <property type="evidence" value="ECO:0000314"/>
    <property type="project" value="SGD"/>
</dbReference>
<dbReference type="GO" id="GO:0003714">
    <property type="term" value="F:transcription corepressor activity"/>
    <property type="evidence" value="ECO:0000314"/>
    <property type="project" value="SGD"/>
</dbReference>
<dbReference type="GO" id="GO:0006338">
    <property type="term" value="P:chromatin remodeling"/>
    <property type="evidence" value="ECO:0000315"/>
    <property type="project" value="SGD"/>
</dbReference>
<dbReference type="GO" id="GO:0006972">
    <property type="term" value="P:hyperosmotic response"/>
    <property type="evidence" value="ECO:0000314"/>
    <property type="project" value="ComplexPortal"/>
</dbReference>
<dbReference type="GO" id="GO:0000278">
    <property type="term" value="P:mitotic cell cycle"/>
    <property type="evidence" value="ECO:0000315"/>
    <property type="project" value="SGD"/>
</dbReference>
<dbReference type="GO" id="GO:2000879">
    <property type="term" value="P:negative regulation of dipeptide transport"/>
    <property type="evidence" value="ECO:0000315"/>
    <property type="project" value="SGD"/>
</dbReference>
<dbReference type="GO" id="GO:0045892">
    <property type="term" value="P:negative regulation of DNA-templated transcription"/>
    <property type="evidence" value="ECO:0000314"/>
    <property type="project" value="ComplexPortal"/>
</dbReference>
<dbReference type="GO" id="GO:0000122">
    <property type="term" value="P:negative regulation of transcription by RNA polymerase II"/>
    <property type="evidence" value="ECO:0000315"/>
    <property type="project" value="SGD"/>
</dbReference>
<dbReference type="GO" id="GO:0045944">
    <property type="term" value="P:positive regulation of transcription by RNA polymerase II"/>
    <property type="evidence" value="ECO:0000315"/>
    <property type="project" value="SGD"/>
</dbReference>
<dbReference type="GO" id="GO:0042304">
    <property type="term" value="P:regulation of fatty acid biosynthetic process"/>
    <property type="evidence" value="ECO:0000315"/>
    <property type="project" value="SGD"/>
</dbReference>
<dbReference type="GO" id="GO:0006357">
    <property type="term" value="P:regulation of transcription by RNA polymerase II"/>
    <property type="evidence" value="ECO:0000315"/>
    <property type="project" value="SGD"/>
</dbReference>
<dbReference type="FunFam" id="1.25.40.10:FF:001929">
    <property type="entry name" value="Cyc8p"/>
    <property type="match status" value="1"/>
</dbReference>
<dbReference type="FunFam" id="1.25.40.10:FF:000078">
    <property type="entry name" value="Transcriptional corepressor Cyc8"/>
    <property type="match status" value="1"/>
</dbReference>
<dbReference type="FunFam" id="1.25.40.10:FF:000163">
    <property type="entry name" value="Transcriptional corepressor Cyc8"/>
    <property type="match status" value="1"/>
</dbReference>
<dbReference type="Gene3D" id="1.25.40.10">
    <property type="entry name" value="Tetratricopeptide repeat domain"/>
    <property type="match status" value="3"/>
</dbReference>
<dbReference type="InterPro" id="IPR051630">
    <property type="entry name" value="Corepressor-Demethylase"/>
</dbReference>
<dbReference type="InterPro" id="IPR011990">
    <property type="entry name" value="TPR-like_helical_dom_sf"/>
</dbReference>
<dbReference type="InterPro" id="IPR019734">
    <property type="entry name" value="TPR_rpt"/>
</dbReference>
<dbReference type="PANTHER" id="PTHR14017:SF1">
    <property type="entry name" value="LD02225P"/>
    <property type="match status" value="1"/>
</dbReference>
<dbReference type="PANTHER" id="PTHR14017">
    <property type="entry name" value="LYSINE-SPECIFIC DEMETHYLASE"/>
    <property type="match status" value="1"/>
</dbReference>
<dbReference type="Pfam" id="PF00515">
    <property type="entry name" value="TPR_1"/>
    <property type="match status" value="1"/>
</dbReference>
<dbReference type="Pfam" id="PF13432">
    <property type="entry name" value="TPR_16"/>
    <property type="match status" value="1"/>
</dbReference>
<dbReference type="Pfam" id="PF13176">
    <property type="entry name" value="TPR_7"/>
    <property type="match status" value="1"/>
</dbReference>
<dbReference type="SMART" id="SM00028">
    <property type="entry name" value="TPR"/>
    <property type="match status" value="10"/>
</dbReference>
<dbReference type="SUPFAM" id="SSF48452">
    <property type="entry name" value="TPR-like"/>
    <property type="match status" value="1"/>
</dbReference>
<dbReference type="PROSITE" id="PS50005">
    <property type="entry name" value="TPR"/>
    <property type="match status" value="9"/>
</dbReference>
<dbReference type="PROSITE" id="PS50293">
    <property type="entry name" value="TPR_REGION"/>
    <property type="match status" value="1"/>
</dbReference>